<feature type="chain" id="PRO_0000166701" description="Autonomous glycyl radical cofactor">
    <location>
        <begin position="1"/>
        <end position="128"/>
    </location>
</feature>
<feature type="domain" description="Glycine radical" evidence="1">
    <location>
        <begin position="5"/>
        <end position="128"/>
    </location>
</feature>
<feature type="modified residue" description="Glycine radical" evidence="1">
    <location>
        <position position="103"/>
    </location>
</feature>
<gene>
    <name evidence="1" type="primary">grcA</name>
    <name type="ordered locus">HD_1064</name>
</gene>
<comment type="function">
    <text evidence="1">Acts as a radical domain for damaged PFL and possibly other radical proteins.</text>
</comment>
<evidence type="ECO:0000255" key="1">
    <source>
        <dbReference type="HAMAP-Rule" id="MF_00806"/>
    </source>
</evidence>
<organism>
    <name type="scientific">Haemophilus ducreyi (strain 35000HP / ATCC 700724)</name>
    <dbReference type="NCBI Taxonomy" id="233412"/>
    <lineage>
        <taxon>Bacteria</taxon>
        <taxon>Pseudomonadati</taxon>
        <taxon>Pseudomonadota</taxon>
        <taxon>Gammaproteobacteria</taxon>
        <taxon>Pasteurellales</taxon>
        <taxon>Pasteurellaceae</taxon>
        <taxon>Haemophilus</taxon>
    </lineage>
</organism>
<name>GRCA_HAEDU</name>
<dbReference type="EMBL" id="AE017143">
    <property type="protein sequence ID" value="AAP95935.1"/>
    <property type="molecule type" value="Genomic_DNA"/>
</dbReference>
<dbReference type="RefSeq" id="WP_010944984.1">
    <property type="nucleotide sequence ID" value="NC_002940.2"/>
</dbReference>
<dbReference type="SMR" id="Q7VMC2"/>
<dbReference type="STRING" id="233412.HD_1064"/>
<dbReference type="KEGG" id="hdu:HD_1064"/>
<dbReference type="eggNOG" id="COG3445">
    <property type="taxonomic scope" value="Bacteria"/>
</dbReference>
<dbReference type="HOGENOM" id="CLU_133780_0_0_6"/>
<dbReference type="OrthoDB" id="9803969at2"/>
<dbReference type="Proteomes" id="UP000001022">
    <property type="component" value="Chromosome"/>
</dbReference>
<dbReference type="GO" id="GO:0005829">
    <property type="term" value="C:cytosol"/>
    <property type="evidence" value="ECO:0007669"/>
    <property type="project" value="TreeGrafter"/>
</dbReference>
<dbReference type="GO" id="GO:0008861">
    <property type="term" value="F:formate C-acetyltransferase activity"/>
    <property type="evidence" value="ECO:0007669"/>
    <property type="project" value="TreeGrafter"/>
</dbReference>
<dbReference type="FunFam" id="3.20.70.20:FF:000002">
    <property type="entry name" value="Autonomous glycyl radical cofactor"/>
    <property type="match status" value="1"/>
</dbReference>
<dbReference type="Gene3D" id="3.20.70.20">
    <property type="match status" value="1"/>
</dbReference>
<dbReference type="HAMAP" id="MF_00806">
    <property type="entry name" value="GrcA"/>
    <property type="match status" value="1"/>
</dbReference>
<dbReference type="InterPro" id="IPR050244">
    <property type="entry name" value="Auton_GlycylRad_Cofactor"/>
</dbReference>
<dbReference type="InterPro" id="IPR019777">
    <property type="entry name" value="Form_AcTrfase_GR_CS"/>
</dbReference>
<dbReference type="InterPro" id="IPR001150">
    <property type="entry name" value="Gly_radical"/>
</dbReference>
<dbReference type="InterPro" id="IPR011140">
    <property type="entry name" value="Glycyl_radical_cofactor_GrcA"/>
</dbReference>
<dbReference type="NCBIfam" id="TIGR04365">
    <property type="entry name" value="spare_glycyl"/>
    <property type="match status" value="1"/>
</dbReference>
<dbReference type="PANTHER" id="PTHR30191">
    <property type="entry name" value="FORMATE ACETYLTRANSFERASE"/>
    <property type="match status" value="1"/>
</dbReference>
<dbReference type="PANTHER" id="PTHR30191:SF0">
    <property type="entry name" value="FORMATE ACETYLTRANSFERASE 1"/>
    <property type="match status" value="1"/>
</dbReference>
<dbReference type="Pfam" id="PF01228">
    <property type="entry name" value="Gly_radical"/>
    <property type="match status" value="1"/>
</dbReference>
<dbReference type="PIRSF" id="PIRSF000378">
    <property type="entry name" value="Gly_radicl_yfiD"/>
    <property type="match status" value="1"/>
</dbReference>
<dbReference type="SUPFAM" id="SSF51998">
    <property type="entry name" value="PFL-like glycyl radical enzymes"/>
    <property type="match status" value="1"/>
</dbReference>
<dbReference type="PROSITE" id="PS00850">
    <property type="entry name" value="GLY_RADICAL_1"/>
    <property type="match status" value="1"/>
</dbReference>
<dbReference type="PROSITE" id="PS51149">
    <property type="entry name" value="GLY_RADICAL_2"/>
    <property type="match status" value="1"/>
</dbReference>
<reference key="1">
    <citation type="submission" date="2003-06" db="EMBL/GenBank/DDBJ databases">
        <title>The complete genome sequence of Haemophilus ducreyi.</title>
        <authorList>
            <person name="Munson R.S. Jr."/>
            <person name="Ray W.C."/>
            <person name="Mahairas G."/>
            <person name="Sabo P."/>
            <person name="Mungur R."/>
            <person name="Johnson L."/>
            <person name="Nguyen D."/>
            <person name="Wang J."/>
            <person name="Forst C."/>
            <person name="Hood L."/>
        </authorList>
    </citation>
    <scope>NUCLEOTIDE SEQUENCE [LARGE SCALE GENOMIC DNA]</scope>
    <source>
        <strain>35000HP / ATCC 700724</strain>
    </source>
</reference>
<protein>
    <recommendedName>
        <fullName evidence="1">Autonomous glycyl radical cofactor</fullName>
    </recommendedName>
</protein>
<proteinExistence type="inferred from homology"/>
<sequence length="128" mass="14544">MIKGIQITESSNNNLVNSFWLLDEEKNEARCIAAKGDVYQEDQVIAINELGQIAYREIPVNIAPTIKVEGGQHLNVNVLRRETLEDAIKNPEKYPQLTIRVSGYAVRFNSLTPEQQRDVITRTFTESL</sequence>
<accession>Q7VMC2</accession>
<keyword id="KW-0556">Organic radical</keyword>
<keyword id="KW-1185">Reference proteome</keyword>